<protein>
    <recommendedName>
        <fullName evidence="1">Chaperone protein DnaK</fullName>
    </recommendedName>
    <alternativeName>
        <fullName evidence="1">HSP70</fullName>
    </alternativeName>
    <alternativeName>
        <fullName evidence="1">Heat shock 70 kDa protein</fullName>
    </alternativeName>
    <alternativeName>
        <fullName evidence="1">Heat shock protein 70</fullName>
    </alternativeName>
</protein>
<accession>A4VT29</accession>
<reference key="1">
    <citation type="journal article" date="2007" name="PLoS ONE">
        <title>A glimpse of streptococcal toxic shock syndrome from comparative genomics of S. suis 2 Chinese isolates.</title>
        <authorList>
            <person name="Chen C."/>
            <person name="Tang J."/>
            <person name="Dong W."/>
            <person name="Wang C."/>
            <person name="Feng Y."/>
            <person name="Wang J."/>
            <person name="Zheng F."/>
            <person name="Pan X."/>
            <person name="Liu D."/>
            <person name="Li M."/>
            <person name="Song Y."/>
            <person name="Zhu X."/>
            <person name="Sun H."/>
            <person name="Feng T."/>
            <person name="Guo Z."/>
            <person name="Ju A."/>
            <person name="Ge J."/>
            <person name="Dong Y."/>
            <person name="Sun W."/>
            <person name="Jiang Y."/>
            <person name="Wang J."/>
            <person name="Yan J."/>
            <person name="Yang H."/>
            <person name="Wang X."/>
            <person name="Gao G.F."/>
            <person name="Yang R."/>
            <person name="Wang J."/>
            <person name="Yu J."/>
        </authorList>
    </citation>
    <scope>NUCLEOTIDE SEQUENCE [LARGE SCALE GENOMIC DNA]</scope>
    <source>
        <strain>05ZYH33</strain>
    </source>
</reference>
<dbReference type="EMBL" id="CP000407">
    <property type="protein sequence ID" value="ABP89268.1"/>
    <property type="molecule type" value="Genomic_DNA"/>
</dbReference>
<dbReference type="SMR" id="A4VT29"/>
<dbReference type="STRING" id="391295.SSU05_0300"/>
<dbReference type="KEGG" id="ssu:SSU05_0300"/>
<dbReference type="eggNOG" id="COG0443">
    <property type="taxonomic scope" value="Bacteria"/>
</dbReference>
<dbReference type="HOGENOM" id="CLU_005965_2_4_9"/>
<dbReference type="GO" id="GO:0005524">
    <property type="term" value="F:ATP binding"/>
    <property type="evidence" value="ECO:0007669"/>
    <property type="project" value="UniProtKB-UniRule"/>
</dbReference>
<dbReference type="GO" id="GO:0140662">
    <property type="term" value="F:ATP-dependent protein folding chaperone"/>
    <property type="evidence" value="ECO:0007669"/>
    <property type="project" value="InterPro"/>
</dbReference>
<dbReference type="GO" id="GO:0051082">
    <property type="term" value="F:unfolded protein binding"/>
    <property type="evidence" value="ECO:0007669"/>
    <property type="project" value="InterPro"/>
</dbReference>
<dbReference type="CDD" id="cd10234">
    <property type="entry name" value="ASKHA_NBD_HSP70_DnaK-like"/>
    <property type="match status" value="1"/>
</dbReference>
<dbReference type="FunFam" id="2.60.34.10:FF:000014">
    <property type="entry name" value="Chaperone protein DnaK HSP70"/>
    <property type="match status" value="1"/>
</dbReference>
<dbReference type="FunFam" id="3.30.420.40:FF:000071">
    <property type="entry name" value="Molecular chaperone DnaK"/>
    <property type="match status" value="1"/>
</dbReference>
<dbReference type="FunFam" id="3.90.640.10:FF:000003">
    <property type="entry name" value="Molecular chaperone DnaK"/>
    <property type="match status" value="1"/>
</dbReference>
<dbReference type="Gene3D" id="1.20.1270.10">
    <property type="match status" value="1"/>
</dbReference>
<dbReference type="Gene3D" id="3.30.420.40">
    <property type="match status" value="2"/>
</dbReference>
<dbReference type="Gene3D" id="3.90.640.10">
    <property type="entry name" value="Actin, Chain A, domain 4"/>
    <property type="match status" value="1"/>
</dbReference>
<dbReference type="Gene3D" id="2.60.34.10">
    <property type="entry name" value="Substrate Binding Domain Of DNAk, Chain A, domain 1"/>
    <property type="match status" value="1"/>
</dbReference>
<dbReference type="HAMAP" id="MF_00332">
    <property type="entry name" value="DnaK"/>
    <property type="match status" value="1"/>
</dbReference>
<dbReference type="InterPro" id="IPR043129">
    <property type="entry name" value="ATPase_NBD"/>
</dbReference>
<dbReference type="InterPro" id="IPR012725">
    <property type="entry name" value="Chaperone_DnaK"/>
</dbReference>
<dbReference type="InterPro" id="IPR018181">
    <property type="entry name" value="Heat_shock_70_CS"/>
</dbReference>
<dbReference type="InterPro" id="IPR029048">
    <property type="entry name" value="HSP70_C_sf"/>
</dbReference>
<dbReference type="InterPro" id="IPR029047">
    <property type="entry name" value="HSP70_peptide-bd_sf"/>
</dbReference>
<dbReference type="InterPro" id="IPR013126">
    <property type="entry name" value="Hsp_70_fam"/>
</dbReference>
<dbReference type="NCBIfam" id="NF001413">
    <property type="entry name" value="PRK00290.1"/>
    <property type="match status" value="1"/>
</dbReference>
<dbReference type="NCBIfam" id="TIGR02350">
    <property type="entry name" value="prok_dnaK"/>
    <property type="match status" value="1"/>
</dbReference>
<dbReference type="PANTHER" id="PTHR19375">
    <property type="entry name" value="HEAT SHOCK PROTEIN 70KDA"/>
    <property type="match status" value="1"/>
</dbReference>
<dbReference type="Pfam" id="PF00012">
    <property type="entry name" value="HSP70"/>
    <property type="match status" value="1"/>
</dbReference>
<dbReference type="PRINTS" id="PR00301">
    <property type="entry name" value="HEATSHOCK70"/>
</dbReference>
<dbReference type="SUPFAM" id="SSF53067">
    <property type="entry name" value="Actin-like ATPase domain"/>
    <property type="match status" value="2"/>
</dbReference>
<dbReference type="SUPFAM" id="SSF100934">
    <property type="entry name" value="Heat shock protein 70kD (HSP70), C-terminal subdomain"/>
    <property type="match status" value="1"/>
</dbReference>
<dbReference type="SUPFAM" id="SSF100920">
    <property type="entry name" value="Heat shock protein 70kD (HSP70), peptide-binding domain"/>
    <property type="match status" value="1"/>
</dbReference>
<dbReference type="PROSITE" id="PS00297">
    <property type="entry name" value="HSP70_1"/>
    <property type="match status" value="1"/>
</dbReference>
<dbReference type="PROSITE" id="PS00329">
    <property type="entry name" value="HSP70_2"/>
    <property type="match status" value="1"/>
</dbReference>
<dbReference type="PROSITE" id="PS01036">
    <property type="entry name" value="HSP70_3"/>
    <property type="match status" value="1"/>
</dbReference>
<keyword id="KW-0067">ATP-binding</keyword>
<keyword id="KW-0143">Chaperone</keyword>
<keyword id="KW-0547">Nucleotide-binding</keyword>
<keyword id="KW-0597">Phosphoprotein</keyword>
<keyword id="KW-0346">Stress response</keyword>
<feature type="chain" id="PRO_1000059687" description="Chaperone protein DnaK">
    <location>
        <begin position="1"/>
        <end position="607"/>
    </location>
</feature>
<feature type="region of interest" description="Disordered" evidence="2">
    <location>
        <begin position="581"/>
        <end position="607"/>
    </location>
</feature>
<feature type="compositionally biased region" description="Low complexity" evidence="2">
    <location>
        <begin position="581"/>
        <end position="594"/>
    </location>
</feature>
<feature type="compositionally biased region" description="Acidic residues" evidence="2">
    <location>
        <begin position="595"/>
        <end position="607"/>
    </location>
</feature>
<feature type="modified residue" description="Phosphothreonine; by autocatalysis" evidence="1">
    <location>
        <position position="173"/>
    </location>
</feature>
<comment type="function">
    <text evidence="1">Acts as a chaperone.</text>
</comment>
<comment type="induction">
    <text evidence="1">By stress conditions e.g. heat shock.</text>
</comment>
<comment type="similarity">
    <text evidence="1">Belongs to the heat shock protein 70 family.</text>
</comment>
<sequence length="607" mass="64827">MSKIIGIDLGTTNSAVAVLEGTESKIIANPEGNRTTPSVVSFKNGEIIVGDAAKRQAVTNPDTIISIKSKMGTSEKVSANGKEYTPQEISAMILQYLKGYAEEYLGEKVTKAVITVPAYFNDAQRQATKDAGKIAGLEVERIVNEPTAAALAYGLDKTDKDEKILVFDLGGGTFDVSILELGDGVFDVLATAGDNKLGGDDFDQKIIDHMVAEFKKENGIDLSADKMALQRLKDAAEKAKKDLSGVTSTQISLPFITAGAAGPLHLEMTLTRAKFDELTYDLVERTKIPVRQALSDAGLSLSEIDEVILVGGSTRIPAVVEAVKAETGKEPNKSVNPDEVVAMGAAIQGGVITGDVKDVVLLDVTPLSLGIETMGGVFTKLIDRNTTIPTSKSQVFSTAADNQPAVDIHVLQGERPMAADNKTLGRFQLTDIPAAPRGIPQIEVTFDIDKNGIVSVKAKDLGTQKEQTIVIQSNSGLTDEEIDRMMKDAEANAEADKKRKEEVDLRNDVDQAIFATEKTLKETEGKGFDAERDQAQAALDELKAAQEANNLDDMKAKLENLNEKAQALAVKLYEQAAAAQQAAAGQEGAQTANNADDDVVDGEFTEK</sequence>
<gene>
    <name evidence="1" type="primary">dnaK</name>
    <name type="ordered locus">SSU05_0300</name>
</gene>
<proteinExistence type="inferred from homology"/>
<evidence type="ECO:0000255" key="1">
    <source>
        <dbReference type="HAMAP-Rule" id="MF_00332"/>
    </source>
</evidence>
<evidence type="ECO:0000256" key="2">
    <source>
        <dbReference type="SAM" id="MobiDB-lite"/>
    </source>
</evidence>
<organism>
    <name type="scientific">Streptococcus suis (strain 05ZYH33)</name>
    <dbReference type="NCBI Taxonomy" id="391295"/>
    <lineage>
        <taxon>Bacteria</taxon>
        <taxon>Bacillati</taxon>
        <taxon>Bacillota</taxon>
        <taxon>Bacilli</taxon>
        <taxon>Lactobacillales</taxon>
        <taxon>Streptococcaceae</taxon>
        <taxon>Streptococcus</taxon>
    </lineage>
</organism>
<name>DNAK_STRSY</name>